<organism>
    <name type="scientific">Salmonella paratyphi A (strain ATCC 9150 / SARB42)</name>
    <dbReference type="NCBI Taxonomy" id="295319"/>
    <lineage>
        <taxon>Bacteria</taxon>
        <taxon>Pseudomonadati</taxon>
        <taxon>Pseudomonadota</taxon>
        <taxon>Gammaproteobacteria</taxon>
        <taxon>Enterobacterales</taxon>
        <taxon>Enterobacteriaceae</taxon>
        <taxon>Salmonella</taxon>
    </lineage>
</organism>
<feature type="chain" id="PRO_0000227472" description="UvrABC system protein C">
    <location>
        <begin position="1"/>
        <end position="610"/>
    </location>
</feature>
<feature type="domain" description="GIY-YIG" evidence="1">
    <location>
        <begin position="16"/>
        <end position="94"/>
    </location>
</feature>
<feature type="domain" description="UVR" evidence="1">
    <location>
        <begin position="204"/>
        <end position="239"/>
    </location>
</feature>
<gene>
    <name evidence="1" type="primary">uvrC</name>
    <name type="ordered locus">SPA0923</name>
</gene>
<protein>
    <recommendedName>
        <fullName evidence="1">UvrABC system protein C</fullName>
        <shortName evidence="1">Protein UvrC</shortName>
    </recommendedName>
    <alternativeName>
        <fullName evidence="1">Excinuclease ABC subunit C</fullName>
    </alternativeName>
</protein>
<keyword id="KW-0963">Cytoplasm</keyword>
<keyword id="KW-0227">DNA damage</keyword>
<keyword id="KW-0228">DNA excision</keyword>
<keyword id="KW-0234">DNA repair</keyword>
<keyword id="KW-0267">Excision nuclease</keyword>
<keyword id="KW-0742">SOS response</keyword>
<dbReference type="EMBL" id="CP000026">
    <property type="protein sequence ID" value="AAV76902.1"/>
    <property type="molecule type" value="Genomic_DNA"/>
</dbReference>
<dbReference type="RefSeq" id="WP_001289471.1">
    <property type="nucleotide sequence ID" value="NC_006511.1"/>
</dbReference>
<dbReference type="SMR" id="Q5PI10"/>
<dbReference type="KEGG" id="spt:SPA0923"/>
<dbReference type="HOGENOM" id="CLU_014841_3_0_6"/>
<dbReference type="Proteomes" id="UP000008185">
    <property type="component" value="Chromosome"/>
</dbReference>
<dbReference type="GO" id="GO:0005737">
    <property type="term" value="C:cytoplasm"/>
    <property type="evidence" value="ECO:0007669"/>
    <property type="project" value="UniProtKB-SubCell"/>
</dbReference>
<dbReference type="GO" id="GO:0009380">
    <property type="term" value="C:excinuclease repair complex"/>
    <property type="evidence" value="ECO:0007669"/>
    <property type="project" value="InterPro"/>
</dbReference>
<dbReference type="GO" id="GO:0003677">
    <property type="term" value="F:DNA binding"/>
    <property type="evidence" value="ECO:0007669"/>
    <property type="project" value="UniProtKB-UniRule"/>
</dbReference>
<dbReference type="GO" id="GO:0009381">
    <property type="term" value="F:excinuclease ABC activity"/>
    <property type="evidence" value="ECO:0007669"/>
    <property type="project" value="UniProtKB-UniRule"/>
</dbReference>
<dbReference type="GO" id="GO:0006289">
    <property type="term" value="P:nucleotide-excision repair"/>
    <property type="evidence" value="ECO:0007669"/>
    <property type="project" value="UniProtKB-UniRule"/>
</dbReference>
<dbReference type="GO" id="GO:0009432">
    <property type="term" value="P:SOS response"/>
    <property type="evidence" value="ECO:0007669"/>
    <property type="project" value="UniProtKB-UniRule"/>
</dbReference>
<dbReference type="CDD" id="cd10434">
    <property type="entry name" value="GIY-YIG_UvrC_Cho"/>
    <property type="match status" value="1"/>
</dbReference>
<dbReference type="FunFam" id="1.10.150.20:FF:000005">
    <property type="entry name" value="UvrABC system protein C"/>
    <property type="match status" value="1"/>
</dbReference>
<dbReference type="FunFam" id="3.30.420.340:FF:000001">
    <property type="entry name" value="UvrABC system protein C"/>
    <property type="match status" value="1"/>
</dbReference>
<dbReference type="FunFam" id="3.40.1440.10:FF:000001">
    <property type="entry name" value="UvrABC system protein C"/>
    <property type="match status" value="1"/>
</dbReference>
<dbReference type="FunFam" id="4.10.860.10:FF:000002">
    <property type="entry name" value="UvrABC system protein C"/>
    <property type="match status" value="1"/>
</dbReference>
<dbReference type="Gene3D" id="1.10.150.20">
    <property type="entry name" value="5' to 3' exonuclease, C-terminal subdomain"/>
    <property type="match status" value="1"/>
</dbReference>
<dbReference type="Gene3D" id="3.40.1440.10">
    <property type="entry name" value="GIY-YIG endonuclease"/>
    <property type="match status" value="1"/>
</dbReference>
<dbReference type="Gene3D" id="4.10.860.10">
    <property type="entry name" value="UVR domain"/>
    <property type="match status" value="1"/>
</dbReference>
<dbReference type="Gene3D" id="3.30.420.340">
    <property type="entry name" value="UvrC, RNAse H endonuclease domain"/>
    <property type="match status" value="1"/>
</dbReference>
<dbReference type="HAMAP" id="MF_00203">
    <property type="entry name" value="UvrC"/>
    <property type="match status" value="1"/>
</dbReference>
<dbReference type="InterPro" id="IPR000305">
    <property type="entry name" value="GIY-YIG_endonuc"/>
</dbReference>
<dbReference type="InterPro" id="IPR035901">
    <property type="entry name" value="GIY-YIG_endonuc_sf"/>
</dbReference>
<dbReference type="InterPro" id="IPR047296">
    <property type="entry name" value="GIY-YIG_UvrC_Cho"/>
</dbReference>
<dbReference type="InterPro" id="IPR003583">
    <property type="entry name" value="Hlx-hairpin-Hlx_DNA-bd_motif"/>
</dbReference>
<dbReference type="InterPro" id="IPR010994">
    <property type="entry name" value="RuvA_2-like"/>
</dbReference>
<dbReference type="InterPro" id="IPR001943">
    <property type="entry name" value="UVR_dom"/>
</dbReference>
<dbReference type="InterPro" id="IPR036876">
    <property type="entry name" value="UVR_dom_sf"/>
</dbReference>
<dbReference type="InterPro" id="IPR050066">
    <property type="entry name" value="UvrABC_protein_C"/>
</dbReference>
<dbReference type="InterPro" id="IPR004791">
    <property type="entry name" value="UvrC"/>
</dbReference>
<dbReference type="InterPro" id="IPR001162">
    <property type="entry name" value="UvrC_RNase_H_dom"/>
</dbReference>
<dbReference type="InterPro" id="IPR038476">
    <property type="entry name" value="UvrC_RNase_H_dom_sf"/>
</dbReference>
<dbReference type="NCBIfam" id="NF001824">
    <property type="entry name" value="PRK00558.1-5"/>
    <property type="match status" value="1"/>
</dbReference>
<dbReference type="NCBIfam" id="TIGR00194">
    <property type="entry name" value="uvrC"/>
    <property type="match status" value="1"/>
</dbReference>
<dbReference type="PANTHER" id="PTHR30562:SF1">
    <property type="entry name" value="UVRABC SYSTEM PROTEIN C"/>
    <property type="match status" value="1"/>
</dbReference>
<dbReference type="PANTHER" id="PTHR30562">
    <property type="entry name" value="UVRC/OXIDOREDUCTASE"/>
    <property type="match status" value="1"/>
</dbReference>
<dbReference type="Pfam" id="PF01541">
    <property type="entry name" value="GIY-YIG"/>
    <property type="match status" value="1"/>
</dbReference>
<dbReference type="Pfam" id="PF14520">
    <property type="entry name" value="HHH_5"/>
    <property type="match status" value="1"/>
</dbReference>
<dbReference type="Pfam" id="PF02151">
    <property type="entry name" value="UVR"/>
    <property type="match status" value="1"/>
</dbReference>
<dbReference type="Pfam" id="PF22920">
    <property type="entry name" value="UvrC_RNaseH"/>
    <property type="match status" value="1"/>
</dbReference>
<dbReference type="Pfam" id="PF08459">
    <property type="entry name" value="UvrC_RNaseH_dom"/>
    <property type="match status" value="1"/>
</dbReference>
<dbReference type="SMART" id="SM00465">
    <property type="entry name" value="GIYc"/>
    <property type="match status" value="1"/>
</dbReference>
<dbReference type="SMART" id="SM00278">
    <property type="entry name" value="HhH1"/>
    <property type="match status" value="2"/>
</dbReference>
<dbReference type="SUPFAM" id="SSF46600">
    <property type="entry name" value="C-terminal UvrC-binding domain of UvrB"/>
    <property type="match status" value="1"/>
</dbReference>
<dbReference type="SUPFAM" id="SSF82771">
    <property type="entry name" value="GIY-YIG endonuclease"/>
    <property type="match status" value="1"/>
</dbReference>
<dbReference type="SUPFAM" id="SSF47781">
    <property type="entry name" value="RuvA domain 2-like"/>
    <property type="match status" value="1"/>
</dbReference>
<dbReference type="PROSITE" id="PS50164">
    <property type="entry name" value="GIY_YIG"/>
    <property type="match status" value="1"/>
</dbReference>
<dbReference type="PROSITE" id="PS50151">
    <property type="entry name" value="UVR"/>
    <property type="match status" value="1"/>
</dbReference>
<dbReference type="PROSITE" id="PS50165">
    <property type="entry name" value="UVRC"/>
    <property type="match status" value="1"/>
</dbReference>
<accession>Q5PI10</accession>
<sequence>MSEIFDAKAFLKTVTSQPGVYRMYDAGGTVIYVGKAKDLKKRLSSYFRSNLASRKTEALVAQIQHIDVTVTHTETEALLLEHNYIKLYQPRYNVLLRDDKSYPFIFLSGDTHPRLAMHRGAKHAKGEYFGPFPNGYAVRETLALLQKIFPIRQCENSVYRNRSRPCLQYQIGRCLGPCVAGLVSEEEYTQQVEYVRLFLSGKDDQVLTQLIARMEKASQDLAFEEAARIRDQIQAVRRVTEKQFVSNAGDDLDVIGVAFDAGMACVHVLFIRQGKVLGSRSYFPKVPGGTELGEVVETFVGQFYLQGSQMRTLPGEILLDFNLSDKTLLADSLSELAGRRIHVQTKPRGDRARYLKLARTNAATALITKLSQQSTITQRLTALAAVLKLPAIKRMECFDISHTMGEQTVASCVVFDANGPLRAEYRRYNIAGITPGDDYAAMNQVLRRRYGKAIEESKIPDVILIDGGKGQLAQAKAVFAELDVPWDKHCPLLLGVAKGADRKAGLETLFFEPEGEGFSLPPDSPALHVIQHIRDESHDHAIGGHRKKRAKVKNTSTLETIEGVGPKRRQMLLKYMGGLQGLRNASVEEIAKVPGISQGLAEKIFWSLKH</sequence>
<comment type="function">
    <text evidence="1">The UvrABC repair system catalyzes the recognition and processing of DNA lesions. UvrC both incises the 5' and 3' sides of the lesion. The N-terminal half is responsible for the 3' incision and the C-terminal half is responsible for the 5' incision.</text>
</comment>
<comment type="subunit">
    <text evidence="1">Interacts with UvrB in an incision complex.</text>
</comment>
<comment type="subcellular location">
    <subcellularLocation>
        <location evidence="1">Cytoplasm</location>
    </subcellularLocation>
</comment>
<comment type="similarity">
    <text evidence="1">Belongs to the UvrC family.</text>
</comment>
<reference key="1">
    <citation type="journal article" date="2004" name="Nat. Genet.">
        <title>Comparison of genome degradation in Paratyphi A and Typhi, human-restricted serovars of Salmonella enterica that cause typhoid.</title>
        <authorList>
            <person name="McClelland M."/>
            <person name="Sanderson K.E."/>
            <person name="Clifton S.W."/>
            <person name="Latreille P."/>
            <person name="Porwollik S."/>
            <person name="Sabo A."/>
            <person name="Meyer R."/>
            <person name="Bieri T."/>
            <person name="Ozersky P."/>
            <person name="McLellan M."/>
            <person name="Harkins C.R."/>
            <person name="Wang C."/>
            <person name="Nguyen C."/>
            <person name="Berghoff A."/>
            <person name="Elliott G."/>
            <person name="Kohlberg S."/>
            <person name="Strong C."/>
            <person name="Du F."/>
            <person name="Carter J."/>
            <person name="Kremizki C."/>
            <person name="Layman D."/>
            <person name="Leonard S."/>
            <person name="Sun H."/>
            <person name="Fulton L."/>
            <person name="Nash W."/>
            <person name="Miner T."/>
            <person name="Minx P."/>
            <person name="Delehaunty K."/>
            <person name="Fronick C."/>
            <person name="Magrini V."/>
            <person name="Nhan M."/>
            <person name="Warren W."/>
            <person name="Florea L."/>
            <person name="Spieth J."/>
            <person name="Wilson R.K."/>
        </authorList>
    </citation>
    <scope>NUCLEOTIDE SEQUENCE [LARGE SCALE GENOMIC DNA]</scope>
    <source>
        <strain>ATCC 9150 / SARB42</strain>
    </source>
</reference>
<proteinExistence type="inferred from homology"/>
<name>UVRC_SALPA</name>
<evidence type="ECO:0000255" key="1">
    <source>
        <dbReference type="HAMAP-Rule" id="MF_00203"/>
    </source>
</evidence>